<dbReference type="EC" id="3.1.-.-" evidence="1"/>
<dbReference type="EMBL" id="GG657461">
    <property type="protein sequence ID" value="OAT11001.1"/>
    <property type="molecule type" value="Genomic_DNA"/>
</dbReference>
<dbReference type="SMR" id="C5JVG7"/>
<dbReference type="STRING" id="559298.C5JVG7"/>
<dbReference type="VEuPathDB" id="FungiDB:BDBG_06759"/>
<dbReference type="HOGENOM" id="CLU_032444_2_0_1"/>
<dbReference type="OrthoDB" id="1937206at2759"/>
<dbReference type="Proteomes" id="UP000002038">
    <property type="component" value="Unassembled WGS sequence"/>
</dbReference>
<dbReference type="GO" id="GO:0005739">
    <property type="term" value="C:mitochondrion"/>
    <property type="evidence" value="ECO:0007669"/>
    <property type="project" value="UniProtKB-SubCell"/>
</dbReference>
<dbReference type="GO" id="GO:0005730">
    <property type="term" value="C:nucleolus"/>
    <property type="evidence" value="ECO:0007669"/>
    <property type="project" value="UniProtKB-SubCell"/>
</dbReference>
<dbReference type="GO" id="GO:0005654">
    <property type="term" value="C:nucleoplasm"/>
    <property type="evidence" value="ECO:0007669"/>
    <property type="project" value="UniProtKB-SubCell"/>
</dbReference>
<dbReference type="GO" id="GO:0008409">
    <property type="term" value="F:5'-3' exonuclease activity"/>
    <property type="evidence" value="ECO:0007669"/>
    <property type="project" value="UniProtKB-UniRule"/>
</dbReference>
<dbReference type="GO" id="GO:0017108">
    <property type="term" value="F:5'-flap endonuclease activity"/>
    <property type="evidence" value="ECO:0007669"/>
    <property type="project" value="UniProtKB-UniRule"/>
</dbReference>
<dbReference type="GO" id="GO:0003677">
    <property type="term" value="F:DNA binding"/>
    <property type="evidence" value="ECO:0007669"/>
    <property type="project" value="UniProtKB-UniRule"/>
</dbReference>
<dbReference type="GO" id="GO:0000287">
    <property type="term" value="F:magnesium ion binding"/>
    <property type="evidence" value="ECO:0007669"/>
    <property type="project" value="UniProtKB-UniRule"/>
</dbReference>
<dbReference type="GO" id="GO:0006284">
    <property type="term" value="P:base-excision repair"/>
    <property type="evidence" value="ECO:0007669"/>
    <property type="project" value="UniProtKB-UniRule"/>
</dbReference>
<dbReference type="GO" id="GO:0043137">
    <property type="term" value="P:DNA replication, removal of RNA primer"/>
    <property type="evidence" value="ECO:0007669"/>
    <property type="project" value="UniProtKB-UniRule"/>
</dbReference>
<dbReference type="CDD" id="cd09907">
    <property type="entry name" value="H3TH_FEN1-Euk"/>
    <property type="match status" value="1"/>
</dbReference>
<dbReference type="CDD" id="cd09867">
    <property type="entry name" value="PIN_FEN1"/>
    <property type="match status" value="1"/>
</dbReference>
<dbReference type="FunFam" id="1.10.150.20:FF:000009">
    <property type="entry name" value="Flap endonuclease 1"/>
    <property type="match status" value="1"/>
</dbReference>
<dbReference type="FunFam" id="3.40.50.1010:FF:000003">
    <property type="entry name" value="Flap endonuclease 1"/>
    <property type="match status" value="1"/>
</dbReference>
<dbReference type="Gene3D" id="1.10.150.20">
    <property type="entry name" value="5' to 3' exonuclease, C-terminal subdomain"/>
    <property type="match status" value="1"/>
</dbReference>
<dbReference type="Gene3D" id="3.40.50.1010">
    <property type="entry name" value="5'-nuclease"/>
    <property type="match status" value="1"/>
</dbReference>
<dbReference type="HAMAP" id="MF_00614">
    <property type="entry name" value="Fen"/>
    <property type="match status" value="1"/>
</dbReference>
<dbReference type="InterPro" id="IPR036279">
    <property type="entry name" value="5-3_exonuclease_C_sf"/>
</dbReference>
<dbReference type="InterPro" id="IPR023426">
    <property type="entry name" value="Flap_endonuc"/>
</dbReference>
<dbReference type="InterPro" id="IPR008918">
    <property type="entry name" value="HhH2"/>
</dbReference>
<dbReference type="InterPro" id="IPR029060">
    <property type="entry name" value="PIN-like_dom_sf"/>
</dbReference>
<dbReference type="InterPro" id="IPR006086">
    <property type="entry name" value="XPG-I_dom"/>
</dbReference>
<dbReference type="InterPro" id="IPR006084">
    <property type="entry name" value="XPG/Rad2"/>
</dbReference>
<dbReference type="InterPro" id="IPR019974">
    <property type="entry name" value="XPG_CS"/>
</dbReference>
<dbReference type="InterPro" id="IPR006085">
    <property type="entry name" value="XPG_DNA_repair_N"/>
</dbReference>
<dbReference type="PANTHER" id="PTHR11081:SF9">
    <property type="entry name" value="FLAP ENDONUCLEASE 1"/>
    <property type="match status" value="1"/>
</dbReference>
<dbReference type="PANTHER" id="PTHR11081">
    <property type="entry name" value="FLAP ENDONUCLEASE FAMILY MEMBER"/>
    <property type="match status" value="1"/>
</dbReference>
<dbReference type="Pfam" id="PF00867">
    <property type="entry name" value="XPG_I"/>
    <property type="match status" value="1"/>
</dbReference>
<dbReference type="Pfam" id="PF00752">
    <property type="entry name" value="XPG_N"/>
    <property type="match status" value="1"/>
</dbReference>
<dbReference type="PRINTS" id="PR00853">
    <property type="entry name" value="XPGRADSUPER"/>
</dbReference>
<dbReference type="SMART" id="SM00279">
    <property type="entry name" value="HhH2"/>
    <property type="match status" value="1"/>
</dbReference>
<dbReference type="SMART" id="SM00484">
    <property type="entry name" value="XPGI"/>
    <property type="match status" value="1"/>
</dbReference>
<dbReference type="SMART" id="SM00485">
    <property type="entry name" value="XPGN"/>
    <property type="match status" value="1"/>
</dbReference>
<dbReference type="SUPFAM" id="SSF47807">
    <property type="entry name" value="5' to 3' exonuclease, C-terminal subdomain"/>
    <property type="match status" value="1"/>
</dbReference>
<dbReference type="SUPFAM" id="SSF88723">
    <property type="entry name" value="PIN domain-like"/>
    <property type="match status" value="1"/>
</dbReference>
<dbReference type="PROSITE" id="PS00841">
    <property type="entry name" value="XPG_1"/>
    <property type="match status" value="1"/>
</dbReference>
<dbReference type="PROSITE" id="PS00842">
    <property type="entry name" value="XPG_2"/>
    <property type="match status" value="1"/>
</dbReference>
<reference key="1">
    <citation type="journal article" date="2015" name="PLoS Genet.">
        <title>The dynamic genome and transcriptome of the human fungal pathogen Blastomyces and close relative Emmonsia.</title>
        <authorList>
            <person name="Munoz J.F."/>
            <person name="Gauthier G.M."/>
            <person name="Desjardins C.A."/>
            <person name="Gallo J.E."/>
            <person name="Holder J."/>
            <person name="Sullivan T.D."/>
            <person name="Marty A.J."/>
            <person name="Carmen J.C."/>
            <person name="Chen Z."/>
            <person name="Ding L."/>
            <person name="Gujja S."/>
            <person name="Magrini V."/>
            <person name="Misas E."/>
            <person name="Mitreva M."/>
            <person name="Priest M."/>
            <person name="Saif S."/>
            <person name="Whiston E.A."/>
            <person name="Young S."/>
            <person name="Zeng Q."/>
            <person name="Goldman W.E."/>
            <person name="Mardis E.R."/>
            <person name="Taylor J.W."/>
            <person name="McEwen J.G."/>
            <person name="Clay O.K."/>
            <person name="Klein B.S."/>
            <person name="Cuomo C.A."/>
        </authorList>
    </citation>
    <scope>NUCLEOTIDE SEQUENCE [LARGE SCALE GENOMIC DNA]</scope>
    <source>
        <strain>SLH14081</strain>
    </source>
</reference>
<comment type="function">
    <text evidence="1">Structure-specific nuclease with 5'-flap endonuclease and 5'-3' exonuclease activities involved in DNA replication and repair. During DNA replication, cleaves the 5'-overhanging flap structure that is generated by displacement synthesis when DNA polymerase encounters the 5'-end of a downstream Okazaki fragment. It enters the flap from the 5'-end and then tracks to cleave the flap base, leaving a nick for ligation. Also involved in the long patch base excision repair (LP-BER) pathway, by cleaving within the apurinic/apyrimidinic (AP) site-terminated flap. Acts as a genome stabilization factor that prevents flaps from equilibrating into structures that lead to duplications and deletions. Also possesses 5'-3' exonuclease activity on nicked or gapped double-stranded DNA, and exhibits RNase H activity. Also involved in replication and repair of rDNA and in repairing mitochondrial DNA.</text>
</comment>
<comment type="cofactor">
    <cofactor evidence="1">
        <name>Mg(2+)</name>
        <dbReference type="ChEBI" id="CHEBI:18420"/>
    </cofactor>
    <text evidence="1">Binds 2 magnesium ions per subunit. They probably participate in the reaction catalyzed by the enzyme. May bind an additional third magnesium ion after substrate binding.</text>
</comment>
<comment type="subunit">
    <text evidence="1">Interacts with PCNA. Three molecules of FEN1 bind to one PCNA trimer with each molecule binding to one PCNA monomer. PCNA stimulates the nuclease activity without altering cleavage specificity.</text>
</comment>
<comment type="subcellular location">
    <subcellularLocation>
        <location evidence="1">Nucleus</location>
        <location evidence="1">Nucleolus</location>
    </subcellularLocation>
    <subcellularLocation>
        <location evidence="1">Nucleus</location>
        <location evidence="1">Nucleoplasm</location>
    </subcellularLocation>
    <subcellularLocation>
        <location evidence="1">Mitochondrion</location>
    </subcellularLocation>
    <text evidence="1">Resides mostly in the nucleoli and relocalizes to the nucleoplasm upon DNA damage.</text>
</comment>
<comment type="PTM">
    <text evidence="1">Phosphorylated. Phosphorylation upon DNA damage induces relocalization to the nuclear plasma.</text>
</comment>
<comment type="similarity">
    <text evidence="1">Belongs to the XPG/RAD2 endonuclease family. FEN1 subfamily.</text>
</comment>
<name>FEN1_BLAGS</name>
<protein>
    <recommendedName>
        <fullName evidence="1">Flap endonuclease 1</fullName>
        <shortName evidence="1">FEN-1</shortName>
        <ecNumber evidence="1">3.1.-.-</ecNumber>
    </recommendedName>
    <alternativeName>
        <fullName evidence="1">Flap structure-specific endonuclease 1</fullName>
    </alternativeName>
</protein>
<evidence type="ECO:0000255" key="1">
    <source>
        <dbReference type="HAMAP-Rule" id="MF_03140"/>
    </source>
</evidence>
<evidence type="ECO:0000256" key="2">
    <source>
        <dbReference type="SAM" id="MobiDB-lite"/>
    </source>
</evidence>
<gene>
    <name evidence="1" type="primary">FEN1</name>
    <name type="ORF">BDBG_06759</name>
</gene>
<keyword id="KW-0227">DNA damage</keyword>
<keyword id="KW-0234">DNA repair</keyword>
<keyword id="KW-0235">DNA replication</keyword>
<keyword id="KW-0255">Endonuclease</keyword>
<keyword id="KW-0269">Exonuclease</keyword>
<keyword id="KW-0378">Hydrolase</keyword>
<keyword id="KW-0460">Magnesium</keyword>
<keyword id="KW-0479">Metal-binding</keyword>
<keyword id="KW-0496">Mitochondrion</keyword>
<keyword id="KW-0540">Nuclease</keyword>
<keyword id="KW-0539">Nucleus</keyword>
<keyword id="KW-0597">Phosphoprotein</keyword>
<keyword id="KW-1185">Reference proteome</keyword>
<organism>
    <name type="scientific">Blastomyces gilchristii (strain SLH14081)</name>
    <name type="common">Blastomyces dermatitidis</name>
    <dbReference type="NCBI Taxonomy" id="559298"/>
    <lineage>
        <taxon>Eukaryota</taxon>
        <taxon>Fungi</taxon>
        <taxon>Dikarya</taxon>
        <taxon>Ascomycota</taxon>
        <taxon>Pezizomycotina</taxon>
        <taxon>Eurotiomycetes</taxon>
        <taxon>Eurotiomycetidae</taxon>
        <taxon>Onygenales</taxon>
        <taxon>Ajellomycetaceae</taxon>
        <taxon>Blastomyces</taxon>
    </lineage>
</organism>
<accession>C5JVG7</accession>
<accession>A0A179UVC4</accession>
<sequence>MGIKHLYQVIQENAPDAVKAGEIKNHFGRKVAIDASMSIYSFLVAVRSDGQQLMSETGETTSHLMGMFYRTLRIVENGIKPVYVFDGAPPKLKSGELAKRFMRKSEAAEAHEEAKEVGTAEDVEKFSRRTVRVTREHNEECKKLLKLMGVPYINAPTEAEAQCAVLARAGKVYAAASEDMDTLCFDSPILLRHLTFSEQRKEPILEIHLDRVLEGLDMDRKQFVDLCILLGCDYLDPIPKVGPNTALKLIRDHGSLEKVVEAIQSDPKKKYTIPEDWPYKDARELFFDPDVRKADHPDCNFKWEAPDVEGLVKFLVEEKAFSEDRVRNGAARLQKNLKTAQQSRLEGFFKPIAKTEQEKATLKRKHEEKLELQKKKKKEEAKAKKEAKSKPRGAV</sequence>
<proteinExistence type="inferred from homology"/>
<feature type="chain" id="PRO_0000403558" description="Flap endonuclease 1">
    <location>
        <begin position="1"/>
        <end position="395"/>
    </location>
</feature>
<feature type="region of interest" description="N-domain">
    <location>
        <begin position="1"/>
        <end position="104"/>
    </location>
</feature>
<feature type="region of interest" description="I-domain">
    <location>
        <begin position="122"/>
        <end position="253"/>
    </location>
</feature>
<feature type="region of interest" description="Interaction with PCNA" evidence="1">
    <location>
        <begin position="341"/>
        <end position="349"/>
    </location>
</feature>
<feature type="region of interest" description="Disordered" evidence="2">
    <location>
        <begin position="357"/>
        <end position="395"/>
    </location>
</feature>
<feature type="compositionally biased region" description="Basic and acidic residues" evidence="2">
    <location>
        <begin position="357"/>
        <end position="389"/>
    </location>
</feature>
<feature type="binding site" evidence="1">
    <location>
        <position position="34"/>
    </location>
    <ligand>
        <name>Mg(2+)</name>
        <dbReference type="ChEBI" id="CHEBI:18420"/>
        <label>1</label>
    </ligand>
</feature>
<feature type="binding site" evidence="1">
    <location>
        <position position="47"/>
    </location>
    <ligand>
        <name>DNA</name>
        <dbReference type="ChEBI" id="CHEBI:16991"/>
    </ligand>
</feature>
<feature type="binding site" evidence="1">
    <location>
        <position position="70"/>
    </location>
    <ligand>
        <name>DNA</name>
        <dbReference type="ChEBI" id="CHEBI:16991"/>
    </ligand>
</feature>
<feature type="binding site" evidence="1">
    <location>
        <position position="86"/>
    </location>
    <ligand>
        <name>Mg(2+)</name>
        <dbReference type="ChEBI" id="CHEBI:18420"/>
        <label>1</label>
    </ligand>
</feature>
<feature type="binding site" evidence="1">
    <location>
        <position position="158"/>
    </location>
    <ligand>
        <name>DNA</name>
        <dbReference type="ChEBI" id="CHEBI:16991"/>
    </ligand>
</feature>
<feature type="binding site" evidence="1">
    <location>
        <position position="158"/>
    </location>
    <ligand>
        <name>Mg(2+)</name>
        <dbReference type="ChEBI" id="CHEBI:18420"/>
        <label>1</label>
    </ligand>
</feature>
<feature type="binding site" evidence="1">
    <location>
        <position position="160"/>
    </location>
    <ligand>
        <name>Mg(2+)</name>
        <dbReference type="ChEBI" id="CHEBI:18420"/>
        <label>1</label>
    </ligand>
</feature>
<feature type="binding site" evidence="1">
    <location>
        <position position="179"/>
    </location>
    <ligand>
        <name>Mg(2+)</name>
        <dbReference type="ChEBI" id="CHEBI:18420"/>
        <label>2</label>
    </ligand>
</feature>
<feature type="binding site" evidence="1">
    <location>
        <position position="181"/>
    </location>
    <ligand>
        <name>Mg(2+)</name>
        <dbReference type="ChEBI" id="CHEBI:18420"/>
        <label>2</label>
    </ligand>
</feature>
<feature type="binding site" evidence="1">
    <location>
        <position position="231"/>
    </location>
    <ligand>
        <name>DNA</name>
        <dbReference type="ChEBI" id="CHEBI:16991"/>
    </ligand>
</feature>
<feature type="binding site" evidence="1">
    <location>
        <position position="233"/>
    </location>
    <ligand>
        <name>DNA</name>
        <dbReference type="ChEBI" id="CHEBI:16991"/>
    </ligand>
</feature>
<feature type="binding site" evidence="1">
    <location>
        <position position="233"/>
    </location>
    <ligand>
        <name>Mg(2+)</name>
        <dbReference type="ChEBI" id="CHEBI:18420"/>
        <label>2</label>
    </ligand>
</feature>